<organism>
    <name type="scientific">Salmonella paratyphi B (strain ATCC BAA-1250 / SPB7)</name>
    <dbReference type="NCBI Taxonomy" id="1016998"/>
    <lineage>
        <taxon>Bacteria</taxon>
        <taxon>Pseudomonadati</taxon>
        <taxon>Pseudomonadota</taxon>
        <taxon>Gammaproteobacteria</taxon>
        <taxon>Enterobacterales</taxon>
        <taxon>Enterobacteriaceae</taxon>
        <taxon>Salmonella</taxon>
    </lineage>
</organism>
<accession>A9N5C2</accession>
<name>RHMD_SALPB</name>
<dbReference type="EC" id="4.2.1.90" evidence="1"/>
<dbReference type="EMBL" id="CP000886">
    <property type="protein sequence ID" value="ABX66118.1"/>
    <property type="status" value="ALT_INIT"/>
    <property type="molecule type" value="Genomic_DNA"/>
</dbReference>
<dbReference type="SMR" id="A9N5C2"/>
<dbReference type="KEGG" id="spq:SPAB_00692"/>
<dbReference type="PATRIC" id="fig|1016998.12.peg.651"/>
<dbReference type="HOGENOM" id="CLU_030273_1_0_6"/>
<dbReference type="BioCyc" id="SENT1016998:SPAB_RS02880-MONOMER"/>
<dbReference type="Proteomes" id="UP000008556">
    <property type="component" value="Chromosome"/>
</dbReference>
<dbReference type="GO" id="GO:0050032">
    <property type="term" value="F:L-rhamnonate dehydratase activity"/>
    <property type="evidence" value="ECO:0007669"/>
    <property type="project" value="UniProtKB-UniRule"/>
</dbReference>
<dbReference type="GO" id="GO:0000287">
    <property type="term" value="F:magnesium ion binding"/>
    <property type="evidence" value="ECO:0007669"/>
    <property type="project" value="UniProtKB-UniRule"/>
</dbReference>
<dbReference type="GO" id="GO:0009063">
    <property type="term" value="P:amino acid catabolic process"/>
    <property type="evidence" value="ECO:0007669"/>
    <property type="project" value="InterPro"/>
</dbReference>
<dbReference type="GO" id="GO:0016052">
    <property type="term" value="P:carbohydrate catabolic process"/>
    <property type="evidence" value="ECO:0007669"/>
    <property type="project" value="TreeGrafter"/>
</dbReference>
<dbReference type="CDD" id="cd03327">
    <property type="entry name" value="MR_like_2"/>
    <property type="match status" value="1"/>
</dbReference>
<dbReference type="FunFam" id="3.30.390.10:FF:000007">
    <property type="entry name" value="L-rhamnonate dehydratase"/>
    <property type="match status" value="1"/>
</dbReference>
<dbReference type="FunFam" id="3.20.20.120:FF:000005">
    <property type="entry name" value="Putative L-rhamnonate dehydratase"/>
    <property type="match status" value="1"/>
</dbReference>
<dbReference type="Gene3D" id="3.20.20.120">
    <property type="entry name" value="Enolase-like C-terminal domain"/>
    <property type="match status" value="1"/>
</dbReference>
<dbReference type="Gene3D" id="3.30.390.10">
    <property type="entry name" value="Enolase-like, N-terminal domain"/>
    <property type="match status" value="1"/>
</dbReference>
<dbReference type="HAMAP" id="MF_01288">
    <property type="entry name" value="Rhamnon_dehydrat"/>
    <property type="match status" value="1"/>
</dbReference>
<dbReference type="InterPro" id="IPR036849">
    <property type="entry name" value="Enolase-like_C_sf"/>
</dbReference>
<dbReference type="InterPro" id="IPR029017">
    <property type="entry name" value="Enolase-like_N"/>
</dbReference>
<dbReference type="InterPro" id="IPR029065">
    <property type="entry name" value="Enolase_C-like"/>
</dbReference>
<dbReference type="InterPro" id="IPR023444">
    <property type="entry name" value="L-Rhamnon_dehydrat"/>
</dbReference>
<dbReference type="InterPro" id="IPR018110">
    <property type="entry name" value="Mandel_Rmase/mucon_lact_enz_CS"/>
</dbReference>
<dbReference type="InterPro" id="IPR013342">
    <property type="entry name" value="Mandelate_racemase_C"/>
</dbReference>
<dbReference type="InterPro" id="IPR013341">
    <property type="entry name" value="Mandelate_racemase_N_dom"/>
</dbReference>
<dbReference type="InterPro" id="IPR046945">
    <property type="entry name" value="RHMD-like"/>
</dbReference>
<dbReference type="NCBIfam" id="NF011968">
    <property type="entry name" value="PRK15440.1"/>
    <property type="match status" value="1"/>
</dbReference>
<dbReference type="PANTHER" id="PTHR13794">
    <property type="entry name" value="ENOLASE SUPERFAMILY, MANDELATE RACEMASE"/>
    <property type="match status" value="1"/>
</dbReference>
<dbReference type="PANTHER" id="PTHR13794:SF58">
    <property type="entry name" value="MITOCHONDRIAL ENOLASE SUPERFAMILY MEMBER 1"/>
    <property type="match status" value="1"/>
</dbReference>
<dbReference type="Pfam" id="PF13378">
    <property type="entry name" value="MR_MLE_C"/>
    <property type="match status" value="1"/>
</dbReference>
<dbReference type="Pfam" id="PF02746">
    <property type="entry name" value="MR_MLE_N"/>
    <property type="match status" value="1"/>
</dbReference>
<dbReference type="SFLD" id="SFLDS00001">
    <property type="entry name" value="Enolase"/>
    <property type="match status" value="1"/>
</dbReference>
<dbReference type="SFLD" id="SFLDF00006">
    <property type="entry name" value="rhamnonate_dehydratase"/>
    <property type="match status" value="1"/>
</dbReference>
<dbReference type="SMART" id="SM00922">
    <property type="entry name" value="MR_MLE"/>
    <property type="match status" value="1"/>
</dbReference>
<dbReference type="SUPFAM" id="SSF51604">
    <property type="entry name" value="Enolase C-terminal domain-like"/>
    <property type="match status" value="1"/>
</dbReference>
<dbReference type="SUPFAM" id="SSF54826">
    <property type="entry name" value="Enolase N-terminal domain-like"/>
    <property type="match status" value="1"/>
</dbReference>
<dbReference type="PROSITE" id="PS00908">
    <property type="entry name" value="MR_MLE_1"/>
    <property type="match status" value="1"/>
</dbReference>
<evidence type="ECO:0000255" key="1">
    <source>
        <dbReference type="HAMAP-Rule" id="MF_01288"/>
    </source>
</evidence>
<evidence type="ECO:0000305" key="2"/>
<gene>
    <name evidence="1" type="primary">rhmD</name>
    <name type="ordered locus">SPAB_00692</name>
</gene>
<reference key="1">
    <citation type="submission" date="2007-11" db="EMBL/GenBank/DDBJ databases">
        <authorList>
            <consortium name="The Salmonella enterica serovar Paratyphi B Genome Sequencing Project"/>
            <person name="McClelland M."/>
            <person name="Sanderson E.K."/>
            <person name="Porwollik S."/>
            <person name="Spieth J."/>
            <person name="Clifton W.S."/>
            <person name="Fulton R."/>
            <person name="Cordes M."/>
            <person name="Wollam A."/>
            <person name="Shah N."/>
            <person name="Pepin K."/>
            <person name="Bhonagiri V."/>
            <person name="Nash W."/>
            <person name="Johnson M."/>
            <person name="Thiruvilangam P."/>
            <person name="Wilson R."/>
        </authorList>
    </citation>
    <scope>NUCLEOTIDE SEQUENCE [LARGE SCALE GENOMIC DNA]</scope>
    <source>
        <strain>ATCC BAA-1250 / SPB7</strain>
    </source>
</reference>
<sequence>MENIMTLPKIKHVRAWFIGGATAEKGAGGGDYHDQGGNHWIDDHIATPMSKYRDYEQSRQSFGINVLGTLIVEVEAENGQTGFAVSTAGEMGCFIVEKHLNRFIEGKCVSDIKLIHDQMLGATMYYSGSGGLVMNTISCVDLALWDLFGKVVGLPVYKLLGGAVRDEIQFYATGARPDLAKEMGFIGGKMPTHWGPHDGDAGIRKDAAMVADMREKCGPDFWLMLDCWMSQDVNYATKLAHACAPFNLKWIEECLPPQQYEGYRELKRNAPAGMMVTSGEHHGTLQSFRTLAETGIDIMQPDVGWCGGLTTLVEIAALAKSRGQLVVPHGSSVYSHHAVITFTNTPFSEFLMTSPDCSTLRPQFDPILLDEPVPVNGRIHKSVLDKPGFGVELNRDCHLKRPYSH</sequence>
<proteinExistence type="inferred from homology"/>
<keyword id="KW-0456">Lyase</keyword>
<keyword id="KW-0460">Magnesium</keyword>
<keyword id="KW-0479">Metal-binding</keyword>
<comment type="function">
    <text evidence="1">Catalyzes the dehydration of L-rhamnonate to 2-keto-3-deoxy-L-rhamnonate (KDR).</text>
</comment>
<comment type="catalytic activity">
    <reaction evidence="1">
        <text>L-rhamnonate = 2-dehydro-3-deoxy-L-rhamnonate + H2O</text>
        <dbReference type="Rhea" id="RHEA:23080"/>
        <dbReference type="ChEBI" id="CHEBI:15377"/>
        <dbReference type="ChEBI" id="CHEBI:58118"/>
        <dbReference type="ChEBI" id="CHEBI:58371"/>
        <dbReference type="EC" id="4.2.1.90"/>
    </reaction>
</comment>
<comment type="cofactor">
    <cofactor evidence="1">
        <name>Mg(2+)</name>
        <dbReference type="ChEBI" id="CHEBI:18420"/>
    </cofactor>
    <text evidence="1">Binds 1 Mg(2+) ion per subunit.</text>
</comment>
<comment type="subunit">
    <text evidence="1">Homooctamer; tetramer of dimers.</text>
</comment>
<comment type="miscellaneous">
    <text evidence="1">Reaction proceeds via a syn dehydration.</text>
</comment>
<comment type="similarity">
    <text evidence="1">Belongs to the mandelate racemase/muconate lactonizing enzyme family. RhamD subfamily.</text>
</comment>
<comment type="sequence caution" evidence="2">
    <conflict type="erroneous initiation">
        <sequence resource="EMBL-CDS" id="ABX66118"/>
    </conflict>
</comment>
<protein>
    <recommendedName>
        <fullName evidence="1">L-rhamnonate dehydratase</fullName>
        <shortName evidence="1">RhamD</shortName>
        <ecNumber evidence="1">4.2.1.90</ecNumber>
    </recommendedName>
</protein>
<feature type="chain" id="PRO_0000351705" description="L-rhamnonate dehydratase">
    <location>
        <begin position="1"/>
        <end position="405"/>
    </location>
</feature>
<feature type="active site" description="Proton acceptor" evidence="1">
    <location>
        <position position="329"/>
    </location>
</feature>
<feature type="binding site" evidence="1">
    <location>
        <position position="33"/>
    </location>
    <ligand>
        <name>substrate</name>
    </ligand>
</feature>
<feature type="binding site" evidence="1">
    <location>
        <position position="59"/>
    </location>
    <ligand>
        <name>substrate</name>
    </ligand>
</feature>
<feature type="binding site" evidence="1">
    <location>
        <position position="226"/>
    </location>
    <ligand>
        <name>Mg(2+)</name>
        <dbReference type="ChEBI" id="CHEBI:18420"/>
    </ligand>
</feature>
<feature type="binding site" evidence="1">
    <location>
        <position position="252"/>
    </location>
    <ligand>
        <name>Mg(2+)</name>
        <dbReference type="ChEBI" id="CHEBI:18420"/>
    </ligand>
</feature>
<feature type="binding site" evidence="1">
    <location>
        <position position="280"/>
    </location>
    <ligand>
        <name>Mg(2+)</name>
        <dbReference type="ChEBI" id="CHEBI:18420"/>
    </ligand>
</feature>
<feature type="binding site" evidence="1">
    <location>
        <position position="349"/>
    </location>
    <ligand>
        <name>substrate</name>
    </ligand>
</feature>
<feature type="site" description="Increases basicity of active site His" evidence="1">
    <location>
        <position position="302"/>
    </location>
</feature>
<feature type="site" description="Transition state stabilizer" evidence="1">
    <location>
        <position position="349"/>
    </location>
</feature>